<protein>
    <recommendedName>
        <fullName>Tigger transposable element-derived protein 3</fullName>
    </recommendedName>
</protein>
<comment type="subcellular location">
    <subcellularLocation>
        <location evidence="3 4">Nucleus</location>
    </subcellularLocation>
</comment>
<comment type="similarity">
    <text evidence="6">Belongs to the tigger transposable element derived protein family.</text>
</comment>
<name>TIGD3_MOUSE</name>
<gene>
    <name type="primary">Tigd3</name>
</gene>
<feature type="chain" id="PRO_0000271091" description="Tigger transposable element-derived protein 3">
    <location>
        <begin position="1"/>
        <end position="470"/>
    </location>
</feature>
<feature type="domain" description="HTH psq-type" evidence="3">
    <location>
        <begin position="3"/>
        <end position="55"/>
    </location>
</feature>
<feature type="domain" description="HTH CENPB-type" evidence="4">
    <location>
        <begin position="67"/>
        <end position="137"/>
    </location>
</feature>
<feature type="domain" description="DDE-1" evidence="2">
    <location>
        <begin position="167"/>
        <end position="360"/>
    </location>
</feature>
<feature type="DNA-binding region" description="H-T-H motif" evidence="1">
    <location>
        <begin position="31"/>
        <end position="51"/>
    </location>
</feature>
<feature type="DNA-binding region" description="H-T-H motif" evidence="1">
    <location>
        <begin position="100"/>
        <end position="130"/>
    </location>
</feature>
<feature type="region of interest" description="Disordered" evidence="5">
    <location>
        <begin position="402"/>
        <end position="426"/>
    </location>
</feature>
<feature type="compositionally biased region" description="Basic and acidic residues" evidence="5">
    <location>
        <begin position="402"/>
        <end position="421"/>
    </location>
</feature>
<keyword id="KW-0238">DNA-binding</keyword>
<keyword id="KW-0539">Nucleus</keyword>
<keyword id="KW-1185">Reference proteome</keyword>
<evidence type="ECO:0000250" key="1"/>
<evidence type="ECO:0000255" key="2"/>
<evidence type="ECO:0000255" key="3">
    <source>
        <dbReference type="PROSITE-ProRule" id="PRU00320"/>
    </source>
</evidence>
<evidence type="ECO:0000255" key="4">
    <source>
        <dbReference type="PROSITE-ProRule" id="PRU00583"/>
    </source>
</evidence>
<evidence type="ECO:0000256" key="5">
    <source>
        <dbReference type="SAM" id="MobiDB-lite"/>
    </source>
</evidence>
<evidence type="ECO:0000305" key="6"/>
<accession>Q7TM95</accession>
<proteinExistence type="evidence at transcript level"/>
<organism>
    <name type="scientific">Mus musculus</name>
    <name type="common">Mouse</name>
    <dbReference type="NCBI Taxonomy" id="10090"/>
    <lineage>
        <taxon>Eukaryota</taxon>
        <taxon>Metazoa</taxon>
        <taxon>Chordata</taxon>
        <taxon>Craniata</taxon>
        <taxon>Vertebrata</taxon>
        <taxon>Euteleostomi</taxon>
        <taxon>Mammalia</taxon>
        <taxon>Eutheria</taxon>
        <taxon>Euarchontoglires</taxon>
        <taxon>Glires</taxon>
        <taxon>Rodentia</taxon>
        <taxon>Myomorpha</taxon>
        <taxon>Muroidea</taxon>
        <taxon>Muridae</taxon>
        <taxon>Murinae</taxon>
        <taxon>Mus</taxon>
        <taxon>Mus</taxon>
    </lineage>
</organism>
<reference key="1">
    <citation type="journal article" date="2004" name="Genome Res.">
        <title>The status, quality, and expansion of the NIH full-length cDNA project: the Mammalian Gene Collection (MGC).</title>
        <authorList>
            <consortium name="The MGC Project Team"/>
        </authorList>
    </citation>
    <scope>NUCLEOTIDE SEQUENCE [LARGE SCALE MRNA]</scope>
    <source>
        <strain>129/Sv X 129SvCp</strain>
        <strain>C57BL/6J</strain>
        <tissue>Brain</tissue>
        <tissue>Embryonic stem cell</tissue>
    </source>
</reference>
<dbReference type="EMBL" id="BC053500">
    <property type="protein sequence ID" value="AAH53500.1"/>
    <property type="molecule type" value="mRNA"/>
</dbReference>
<dbReference type="EMBL" id="BC055784">
    <property type="protein sequence ID" value="AAH55784.1"/>
    <property type="molecule type" value="mRNA"/>
</dbReference>
<dbReference type="CCDS" id="CCDS29483.1"/>
<dbReference type="RefSeq" id="NP_001348974.1">
    <property type="nucleotide sequence ID" value="NM_001362045.1"/>
</dbReference>
<dbReference type="RefSeq" id="NP_941036.1">
    <property type="nucleotide sequence ID" value="NM_198634.2"/>
</dbReference>
<dbReference type="RefSeq" id="XP_006531839.1">
    <property type="nucleotide sequence ID" value="XM_006531776.3"/>
</dbReference>
<dbReference type="SMR" id="Q7TM95"/>
<dbReference type="FunCoup" id="Q7TM95">
    <property type="interactions" value="238"/>
</dbReference>
<dbReference type="STRING" id="10090.ENSMUSP00000157880"/>
<dbReference type="PaxDb" id="10090-ENSMUSP00000059302"/>
<dbReference type="Antibodypedia" id="29772">
    <property type="antibodies" value="136 antibodies from 23 providers"/>
</dbReference>
<dbReference type="DNASU" id="332359"/>
<dbReference type="Ensembl" id="ENSMUST00000055911.6">
    <property type="protein sequence ID" value="ENSMUSP00000059302.5"/>
    <property type="gene ID" value="ENSMUSG00000044390.6"/>
</dbReference>
<dbReference type="Ensembl" id="ENSMUST00000236767.2">
    <property type="protein sequence ID" value="ENSMUSP00000157880.2"/>
    <property type="gene ID" value="ENSMUSG00000044390.6"/>
</dbReference>
<dbReference type="GeneID" id="332359"/>
<dbReference type="KEGG" id="mmu:332359"/>
<dbReference type="UCSC" id="uc008gft.1">
    <property type="organism name" value="mouse"/>
</dbReference>
<dbReference type="AGR" id="MGI:2681860"/>
<dbReference type="CTD" id="220359"/>
<dbReference type="MGI" id="MGI:2681860">
    <property type="gene designation" value="Tigd3"/>
</dbReference>
<dbReference type="VEuPathDB" id="HostDB:ENSMUSG00000044390"/>
<dbReference type="eggNOG" id="KOG3105">
    <property type="taxonomic scope" value="Eukaryota"/>
</dbReference>
<dbReference type="GeneTree" id="ENSGT00940000162651"/>
<dbReference type="HOGENOM" id="CLU_018294_0_4_1"/>
<dbReference type="InParanoid" id="Q7TM95"/>
<dbReference type="OMA" id="PGLCHVR"/>
<dbReference type="OrthoDB" id="9909311at2759"/>
<dbReference type="PhylomeDB" id="Q7TM95"/>
<dbReference type="TreeFam" id="TF101131"/>
<dbReference type="BioGRID-ORCS" id="332359">
    <property type="hits" value="2 hits in 79 CRISPR screens"/>
</dbReference>
<dbReference type="ChiTaRS" id="Tigd3">
    <property type="organism name" value="mouse"/>
</dbReference>
<dbReference type="PRO" id="PR:Q7TM95"/>
<dbReference type="Proteomes" id="UP000000589">
    <property type="component" value="Chromosome 19"/>
</dbReference>
<dbReference type="RNAct" id="Q7TM95">
    <property type="molecule type" value="protein"/>
</dbReference>
<dbReference type="Bgee" id="ENSMUSG00000044390">
    <property type="expression patterns" value="Expressed in medial ganglionic eminence and 163 other cell types or tissues"/>
</dbReference>
<dbReference type="GO" id="GO:0005634">
    <property type="term" value="C:nucleus"/>
    <property type="evidence" value="ECO:0007669"/>
    <property type="project" value="UniProtKB-SubCell"/>
</dbReference>
<dbReference type="GO" id="GO:0003677">
    <property type="term" value="F:DNA binding"/>
    <property type="evidence" value="ECO:0007669"/>
    <property type="project" value="UniProtKB-KW"/>
</dbReference>
<dbReference type="Gene3D" id="1.10.10.60">
    <property type="entry name" value="Homeodomain-like"/>
    <property type="match status" value="2"/>
</dbReference>
<dbReference type="InterPro" id="IPR050863">
    <property type="entry name" value="CenT-Element_Derived"/>
</dbReference>
<dbReference type="InterPro" id="IPR004875">
    <property type="entry name" value="DDE_SF_endonuclease_dom"/>
</dbReference>
<dbReference type="InterPro" id="IPR009057">
    <property type="entry name" value="Homeodomain-like_sf"/>
</dbReference>
<dbReference type="InterPro" id="IPR006600">
    <property type="entry name" value="HTH_CenpB_DNA-bd_dom"/>
</dbReference>
<dbReference type="InterPro" id="IPR007889">
    <property type="entry name" value="HTH_Psq"/>
</dbReference>
<dbReference type="PANTHER" id="PTHR19303:SF36">
    <property type="entry name" value="TIGGER TRANSPOSABLE ELEMENT-DERIVED PROTEIN 3"/>
    <property type="match status" value="1"/>
</dbReference>
<dbReference type="PANTHER" id="PTHR19303">
    <property type="entry name" value="TRANSPOSON"/>
    <property type="match status" value="1"/>
</dbReference>
<dbReference type="Pfam" id="PF04218">
    <property type="entry name" value="CENP-B_N"/>
    <property type="match status" value="1"/>
</dbReference>
<dbReference type="Pfam" id="PF03184">
    <property type="entry name" value="DDE_1"/>
    <property type="match status" value="1"/>
</dbReference>
<dbReference type="Pfam" id="PF03221">
    <property type="entry name" value="HTH_Tnp_Tc5"/>
    <property type="match status" value="1"/>
</dbReference>
<dbReference type="SMART" id="SM00674">
    <property type="entry name" value="CENPB"/>
    <property type="match status" value="1"/>
</dbReference>
<dbReference type="SUPFAM" id="SSF46689">
    <property type="entry name" value="Homeodomain-like"/>
    <property type="match status" value="2"/>
</dbReference>
<dbReference type="PROSITE" id="PS51253">
    <property type="entry name" value="HTH_CENPB"/>
    <property type="match status" value="1"/>
</dbReference>
<dbReference type="PROSITE" id="PS50960">
    <property type="entry name" value="HTH_PSQ"/>
    <property type="match status" value="1"/>
</dbReference>
<sequence length="470" mass="52223">MELNTKKKLHALSLAEKIQVLELLDESKMSQSEVARRFQVSQPQISRICKNKEKLLADWCSGTANHERKRKRESKYSGIDEALLCWYHIARAKAWDVTGPMLLHKAKELADIMGQDFVPSIGWLVRWKRRNNVGFGTRQVLVPLFPPEAPPAVLPSQAQPPLSLKDFSPEDVFGCAEVPLLYRAVPGRVFECDRLQVLLCANSRGTEKRRVFVGGLQAAPRCFFGVSSEALPTSYHPDLAIPWSEWLAQFDQDMGQQGRQVALLLASGVVEEWASLPGLHHVRLLPLSASSTTPSLPGSVILAFKAHYRHRLLSKLAAMQSGKEGTSLAEARASITVLDALHMVAAAWAKVPRQLILSSFVQEGLAPGKTPLSLDKDTEMSPVPSGLSQEEFSHFVDLEDEDPGPRVCKEETGTEDSGREEDGFEPLPTKADALQALCTLRRWLECNSASPELFEKFYDCEVEVEQLCCL</sequence>